<proteinExistence type="inferred from homology"/>
<comment type="function">
    <text evidence="1">Endonuclease that specifically degrades the RNA of RNA-DNA hybrids.</text>
</comment>
<comment type="catalytic activity">
    <reaction evidence="1">
        <text>Endonucleolytic cleavage to 5'-phosphomonoester.</text>
        <dbReference type="EC" id="3.1.26.4"/>
    </reaction>
</comment>
<comment type="cofactor">
    <cofactor evidence="1">
        <name>Mn(2+)</name>
        <dbReference type="ChEBI" id="CHEBI:29035"/>
    </cofactor>
    <cofactor evidence="1">
        <name>Mg(2+)</name>
        <dbReference type="ChEBI" id="CHEBI:18420"/>
    </cofactor>
    <text evidence="1">Manganese or magnesium. Binds 1 divalent metal ion per monomer in the absence of substrate. May bind a second metal ion after substrate binding.</text>
</comment>
<comment type="subcellular location">
    <subcellularLocation>
        <location evidence="1">Cytoplasm</location>
    </subcellularLocation>
</comment>
<comment type="similarity">
    <text evidence="1">Belongs to the RNase HII family.</text>
</comment>
<sequence length="222" mass="24275">MSRNIRNVLNMSDLPPQPNFSYELDLQNQGFFHIAGVDEVGRGPLAGPVVTAAVILSKDHSLDGLNDSKKLSVQKRNRLYCEILQSALAISIASICARAIDQSDIRKATLEAMRRCVMGLAVPAHYALIDGRDIPPHLPCPAKALVKGDQRSVSIAAASIVAKVTRDRMMEHAGQVYQGYGLEKHVGYATVAHRAAIAEYGPVIGLHRYSFALIKRYKEDIS</sequence>
<dbReference type="EC" id="3.1.26.4" evidence="1"/>
<dbReference type="EMBL" id="CP000524">
    <property type="protein sequence ID" value="ABM44514.1"/>
    <property type="molecule type" value="Genomic_DNA"/>
</dbReference>
<dbReference type="RefSeq" id="WP_005766386.1">
    <property type="nucleotide sequence ID" value="NC_008783.1"/>
</dbReference>
<dbReference type="SMR" id="A1URV4"/>
<dbReference type="STRING" id="360095.BARBAKC583_0388"/>
<dbReference type="GeneID" id="4685027"/>
<dbReference type="KEGG" id="bbk:BARBAKC583_0388"/>
<dbReference type="PATRIC" id="fig|360095.6.peg.371"/>
<dbReference type="eggNOG" id="COG0164">
    <property type="taxonomic scope" value="Bacteria"/>
</dbReference>
<dbReference type="HOGENOM" id="CLU_036532_3_2_5"/>
<dbReference type="OrthoDB" id="9803420at2"/>
<dbReference type="Proteomes" id="UP000000643">
    <property type="component" value="Chromosome"/>
</dbReference>
<dbReference type="GO" id="GO:0005737">
    <property type="term" value="C:cytoplasm"/>
    <property type="evidence" value="ECO:0007669"/>
    <property type="project" value="UniProtKB-SubCell"/>
</dbReference>
<dbReference type="GO" id="GO:0032299">
    <property type="term" value="C:ribonuclease H2 complex"/>
    <property type="evidence" value="ECO:0007669"/>
    <property type="project" value="TreeGrafter"/>
</dbReference>
<dbReference type="GO" id="GO:0030145">
    <property type="term" value="F:manganese ion binding"/>
    <property type="evidence" value="ECO:0007669"/>
    <property type="project" value="UniProtKB-UniRule"/>
</dbReference>
<dbReference type="GO" id="GO:0003723">
    <property type="term" value="F:RNA binding"/>
    <property type="evidence" value="ECO:0007669"/>
    <property type="project" value="InterPro"/>
</dbReference>
<dbReference type="GO" id="GO:0004523">
    <property type="term" value="F:RNA-DNA hybrid ribonuclease activity"/>
    <property type="evidence" value="ECO:0007669"/>
    <property type="project" value="UniProtKB-UniRule"/>
</dbReference>
<dbReference type="GO" id="GO:0043137">
    <property type="term" value="P:DNA replication, removal of RNA primer"/>
    <property type="evidence" value="ECO:0007669"/>
    <property type="project" value="TreeGrafter"/>
</dbReference>
<dbReference type="GO" id="GO:0006298">
    <property type="term" value="P:mismatch repair"/>
    <property type="evidence" value="ECO:0007669"/>
    <property type="project" value="TreeGrafter"/>
</dbReference>
<dbReference type="CDD" id="cd07182">
    <property type="entry name" value="RNase_HII_bacteria_HII_like"/>
    <property type="match status" value="1"/>
</dbReference>
<dbReference type="Gene3D" id="3.30.420.10">
    <property type="entry name" value="Ribonuclease H-like superfamily/Ribonuclease H"/>
    <property type="match status" value="1"/>
</dbReference>
<dbReference type="HAMAP" id="MF_00052_B">
    <property type="entry name" value="RNase_HII_B"/>
    <property type="match status" value="1"/>
</dbReference>
<dbReference type="InterPro" id="IPR022898">
    <property type="entry name" value="RNase_HII"/>
</dbReference>
<dbReference type="InterPro" id="IPR001352">
    <property type="entry name" value="RNase_HII/HIII"/>
</dbReference>
<dbReference type="InterPro" id="IPR024567">
    <property type="entry name" value="RNase_HII/HIII_dom"/>
</dbReference>
<dbReference type="InterPro" id="IPR012337">
    <property type="entry name" value="RNaseH-like_sf"/>
</dbReference>
<dbReference type="InterPro" id="IPR036397">
    <property type="entry name" value="RNaseH_sf"/>
</dbReference>
<dbReference type="NCBIfam" id="NF000595">
    <property type="entry name" value="PRK00015.1-3"/>
    <property type="match status" value="1"/>
</dbReference>
<dbReference type="PANTHER" id="PTHR10954">
    <property type="entry name" value="RIBONUCLEASE H2 SUBUNIT A"/>
    <property type="match status" value="1"/>
</dbReference>
<dbReference type="PANTHER" id="PTHR10954:SF18">
    <property type="entry name" value="RIBONUCLEASE HII"/>
    <property type="match status" value="1"/>
</dbReference>
<dbReference type="Pfam" id="PF01351">
    <property type="entry name" value="RNase_HII"/>
    <property type="match status" value="1"/>
</dbReference>
<dbReference type="SUPFAM" id="SSF53098">
    <property type="entry name" value="Ribonuclease H-like"/>
    <property type="match status" value="1"/>
</dbReference>
<dbReference type="PROSITE" id="PS51975">
    <property type="entry name" value="RNASE_H_2"/>
    <property type="match status" value="1"/>
</dbReference>
<name>RNH2_BARBK</name>
<keyword id="KW-0963">Cytoplasm</keyword>
<keyword id="KW-0255">Endonuclease</keyword>
<keyword id="KW-0378">Hydrolase</keyword>
<keyword id="KW-0464">Manganese</keyword>
<keyword id="KW-0479">Metal-binding</keyword>
<keyword id="KW-0540">Nuclease</keyword>
<gene>
    <name evidence="1" type="primary">rnhB</name>
    <name type="ordered locus">BARBAKC583_0388</name>
</gene>
<evidence type="ECO:0000255" key="1">
    <source>
        <dbReference type="HAMAP-Rule" id="MF_00052"/>
    </source>
</evidence>
<evidence type="ECO:0000255" key="2">
    <source>
        <dbReference type="PROSITE-ProRule" id="PRU01319"/>
    </source>
</evidence>
<organism>
    <name type="scientific">Bartonella bacilliformis (strain ATCC 35685 / KC583 / Herrer 020/F12,63)</name>
    <dbReference type="NCBI Taxonomy" id="360095"/>
    <lineage>
        <taxon>Bacteria</taxon>
        <taxon>Pseudomonadati</taxon>
        <taxon>Pseudomonadota</taxon>
        <taxon>Alphaproteobacteria</taxon>
        <taxon>Hyphomicrobiales</taxon>
        <taxon>Bartonellaceae</taxon>
        <taxon>Bartonella</taxon>
    </lineage>
</organism>
<feature type="chain" id="PRO_1000031118" description="Ribonuclease HII">
    <location>
        <begin position="1"/>
        <end position="222"/>
    </location>
</feature>
<feature type="domain" description="RNase H type-2" evidence="2">
    <location>
        <begin position="32"/>
        <end position="222"/>
    </location>
</feature>
<feature type="binding site" evidence="1">
    <location>
        <position position="38"/>
    </location>
    <ligand>
        <name>a divalent metal cation</name>
        <dbReference type="ChEBI" id="CHEBI:60240"/>
    </ligand>
</feature>
<feature type="binding site" evidence="1">
    <location>
        <position position="39"/>
    </location>
    <ligand>
        <name>a divalent metal cation</name>
        <dbReference type="ChEBI" id="CHEBI:60240"/>
    </ligand>
</feature>
<feature type="binding site" evidence="1">
    <location>
        <position position="130"/>
    </location>
    <ligand>
        <name>a divalent metal cation</name>
        <dbReference type="ChEBI" id="CHEBI:60240"/>
    </ligand>
</feature>
<accession>A1URV4</accession>
<protein>
    <recommendedName>
        <fullName evidence="1">Ribonuclease HII</fullName>
        <shortName evidence="1">RNase HII</shortName>
        <ecNumber evidence="1">3.1.26.4</ecNumber>
    </recommendedName>
</protein>
<reference key="1">
    <citation type="submission" date="2006-12" db="EMBL/GenBank/DDBJ databases">
        <authorList>
            <person name="Hendrix L."/>
            <person name="Mohamoud Y."/>
            <person name="Radune D."/>
            <person name="Shvartsbeyn A."/>
            <person name="Daugherty S."/>
            <person name="Dodson R."/>
            <person name="Durkin A.S."/>
            <person name="Harkins D."/>
            <person name="Huot H."/>
            <person name="Kothari S.P."/>
            <person name="Madupu R."/>
            <person name="Li J."/>
            <person name="Nelson W.C."/>
            <person name="Shrivastava S."/>
            <person name="Giglio M.G."/>
            <person name="Haft D."/>
            <person name="Selengut J."/>
            <person name="Fraser-Ligget C."/>
            <person name="Seshadri R."/>
        </authorList>
    </citation>
    <scope>NUCLEOTIDE SEQUENCE [LARGE SCALE GENOMIC DNA]</scope>
    <source>
        <strain>ATCC 35685 / KC583 / Herrer 020/F12,63</strain>
    </source>
</reference>